<dbReference type="EMBL" id="CP000817">
    <property type="protein sequence ID" value="ACA40245.1"/>
    <property type="status" value="ALT_INIT"/>
    <property type="molecule type" value="Genomic_DNA"/>
</dbReference>
<dbReference type="RefSeq" id="WP_036162731.1">
    <property type="nucleotide sequence ID" value="NC_010382.1"/>
</dbReference>
<dbReference type="SMR" id="B1HZE8"/>
<dbReference type="EnsemblBacteria" id="ACA40245">
    <property type="protein sequence ID" value="ACA40245"/>
    <property type="gene ID" value="Bsph_2705"/>
</dbReference>
<dbReference type="KEGG" id="lsp:Bsph_2705"/>
<dbReference type="HOGENOM" id="CLU_056339_6_0_9"/>
<dbReference type="Proteomes" id="UP000002164">
    <property type="component" value="Chromosome"/>
</dbReference>
<dbReference type="GO" id="GO:0005737">
    <property type="term" value="C:cytoplasm"/>
    <property type="evidence" value="ECO:0007669"/>
    <property type="project" value="UniProtKB-SubCell"/>
</dbReference>
<dbReference type="GO" id="GO:0016151">
    <property type="term" value="F:nickel cation binding"/>
    <property type="evidence" value="ECO:0007669"/>
    <property type="project" value="UniProtKB-UniRule"/>
</dbReference>
<dbReference type="HAMAP" id="MF_01384">
    <property type="entry name" value="UreD"/>
    <property type="match status" value="1"/>
</dbReference>
<dbReference type="InterPro" id="IPR002669">
    <property type="entry name" value="UreD"/>
</dbReference>
<dbReference type="PANTHER" id="PTHR33643">
    <property type="entry name" value="UREASE ACCESSORY PROTEIN D"/>
    <property type="match status" value="1"/>
</dbReference>
<dbReference type="PANTHER" id="PTHR33643:SF1">
    <property type="entry name" value="UREASE ACCESSORY PROTEIN D"/>
    <property type="match status" value="1"/>
</dbReference>
<dbReference type="Pfam" id="PF01774">
    <property type="entry name" value="UreD"/>
    <property type="match status" value="1"/>
</dbReference>
<proteinExistence type="inferred from homology"/>
<sequence>MVNPQKINHFGKLEMAFEPRRGYTRLVHVYQQPPLKASRELYEGSDPTATVFLMESSGGMVAGDRNEINVKLASGSRVRLKQQSALKIYPSHTGDHCTQAITVEMADEARLEWLPEVTIPFERAKFQADTTIRMKESSTLIWGEIVAPGREMRGEVFDYQAYQSKYKVYVEEQLIAFDSIHFKPQEMNFAALGLLEKALYIGSLWIVSPLVKNLNMRDLQDLIQQEQSLQASVTKLTDQAIHCRWLAKEQRTLHKEINRMFEQMTALL</sequence>
<gene>
    <name evidence="1" type="primary">ureD</name>
    <name type="ordered locus">Bsph_2705</name>
</gene>
<comment type="function">
    <text evidence="1">Required for maturation of urease via the functional incorporation of the urease nickel metallocenter.</text>
</comment>
<comment type="subunit">
    <text evidence="1">UreD, UreF and UreG form a complex that acts as a GTP-hydrolysis-dependent molecular chaperone, activating the urease apoprotein by helping to assemble the nickel containing metallocenter of UreC. The UreE protein probably delivers the nickel.</text>
</comment>
<comment type="subcellular location">
    <subcellularLocation>
        <location evidence="1">Cytoplasm</location>
    </subcellularLocation>
</comment>
<comment type="similarity">
    <text evidence="1">Belongs to the UreD family.</text>
</comment>
<comment type="sequence caution" evidence="2">
    <conflict type="erroneous initiation">
        <sequence resource="EMBL-CDS" id="ACA40245"/>
    </conflict>
</comment>
<evidence type="ECO:0000255" key="1">
    <source>
        <dbReference type="HAMAP-Rule" id="MF_01384"/>
    </source>
</evidence>
<evidence type="ECO:0000305" key="2"/>
<protein>
    <recommendedName>
        <fullName evidence="1">Urease accessory protein UreD</fullName>
    </recommendedName>
</protein>
<reference key="1">
    <citation type="journal article" date="2008" name="J. Bacteriol.">
        <title>Complete genome sequence of the mosquitocidal bacterium Bacillus sphaericus C3-41 and comparison with those of closely related Bacillus species.</title>
        <authorList>
            <person name="Hu X."/>
            <person name="Fan W."/>
            <person name="Han B."/>
            <person name="Liu H."/>
            <person name="Zheng D."/>
            <person name="Li Q."/>
            <person name="Dong W."/>
            <person name="Yan J."/>
            <person name="Gao M."/>
            <person name="Berry C."/>
            <person name="Yuan Z."/>
        </authorList>
    </citation>
    <scope>NUCLEOTIDE SEQUENCE [LARGE SCALE GENOMIC DNA]</scope>
    <source>
        <strain>C3-41</strain>
    </source>
</reference>
<name>URED_LYSSC</name>
<accession>B1HZE8</accession>
<organism>
    <name type="scientific">Lysinibacillus sphaericus (strain C3-41)</name>
    <dbReference type="NCBI Taxonomy" id="444177"/>
    <lineage>
        <taxon>Bacteria</taxon>
        <taxon>Bacillati</taxon>
        <taxon>Bacillota</taxon>
        <taxon>Bacilli</taxon>
        <taxon>Bacillales</taxon>
        <taxon>Bacillaceae</taxon>
        <taxon>Lysinibacillus</taxon>
    </lineage>
</organism>
<feature type="chain" id="PRO_0000346571" description="Urease accessory protein UreD">
    <location>
        <begin position="1"/>
        <end position="268"/>
    </location>
</feature>
<keyword id="KW-0143">Chaperone</keyword>
<keyword id="KW-0963">Cytoplasm</keyword>
<keyword id="KW-0996">Nickel insertion</keyword>